<organism>
    <name type="scientific">Nitrobacter winogradskyi (strain ATCC 25391 / DSM 10237 / CIP 104748 / NCIMB 11846 / Nb-255)</name>
    <dbReference type="NCBI Taxonomy" id="323098"/>
    <lineage>
        <taxon>Bacteria</taxon>
        <taxon>Pseudomonadati</taxon>
        <taxon>Pseudomonadota</taxon>
        <taxon>Alphaproteobacteria</taxon>
        <taxon>Hyphomicrobiales</taxon>
        <taxon>Nitrobacteraceae</taxon>
        <taxon>Nitrobacter</taxon>
    </lineage>
</organism>
<evidence type="ECO:0000255" key="1">
    <source>
        <dbReference type="HAMAP-Rule" id="MF_00406"/>
    </source>
</evidence>
<accession>Q3SRI2</accession>
<name>FABZ_NITWN</name>
<keyword id="KW-0963">Cytoplasm</keyword>
<keyword id="KW-0441">Lipid A biosynthesis</keyword>
<keyword id="KW-0444">Lipid biosynthesis</keyword>
<keyword id="KW-0443">Lipid metabolism</keyword>
<keyword id="KW-0456">Lyase</keyword>
<keyword id="KW-1185">Reference proteome</keyword>
<proteinExistence type="inferred from homology"/>
<comment type="function">
    <text evidence="1">Involved in unsaturated fatty acids biosynthesis. Catalyzes the dehydration of short chain beta-hydroxyacyl-ACPs and long chain saturated and unsaturated beta-hydroxyacyl-ACPs.</text>
</comment>
<comment type="catalytic activity">
    <reaction evidence="1">
        <text>a (3R)-hydroxyacyl-[ACP] = a (2E)-enoyl-[ACP] + H2O</text>
        <dbReference type="Rhea" id="RHEA:13097"/>
        <dbReference type="Rhea" id="RHEA-COMP:9925"/>
        <dbReference type="Rhea" id="RHEA-COMP:9945"/>
        <dbReference type="ChEBI" id="CHEBI:15377"/>
        <dbReference type="ChEBI" id="CHEBI:78784"/>
        <dbReference type="ChEBI" id="CHEBI:78827"/>
        <dbReference type="EC" id="4.2.1.59"/>
    </reaction>
</comment>
<comment type="subcellular location">
    <subcellularLocation>
        <location evidence="1">Cytoplasm</location>
    </subcellularLocation>
</comment>
<comment type="similarity">
    <text evidence="1">Belongs to the thioester dehydratase family. FabZ subfamily.</text>
</comment>
<protein>
    <recommendedName>
        <fullName evidence="1">3-hydroxyacyl-[acyl-carrier-protein] dehydratase FabZ</fullName>
        <ecNumber evidence="1">4.2.1.59</ecNumber>
    </recommendedName>
    <alternativeName>
        <fullName evidence="1">(3R)-hydroxymyristoyl-[acyl-carrier-protein] dehydratase</fullName>
        <shortName evidence="1">(3R)-hydroxymyristoyl-ACP dehydrase</shortName>
    </alternativeName>
    <alternativeName>
        <fullName evidence="1">Beta-hydroxyacyl-ACP dehydratase</fullName>
    </alternativeName>
</protein>
<sequence length="151" mass="17011">MESPVRFEHVDIATILKTLPHRYPFLLIDRVLNIRADHSGIGVKNVTFNEPAFQGHFPERPVYPGVLMIEGMAQTAGVIGIMSVEGTEKPRAVYFLTIDKCKFRKPVMPGDIVEYHMRSIGRRKTMWWFHGDAKVNGTIVAEADVGAMLTD</sequence>
<dbReference type="EC" id="4.2.1.59" evidence="1"/>
<dbReference type="EMBL" id="CP000115">
    <property type="protein sequence ID" value="ABA05109.1"/>
    <property type="molecule type" value="Genomic_DNA"/>
</dbReference>
<dbReference type="RefSeq" id="WP_011315105.1">
    <property type="nucleotide sequence ID" value="NC_007406.1"/>
</dbReference>
<dbReference type="SMR" id="Q3SRI2"/>
<dbReference type="STRING" id="323098.Nwi_1849"/>
<dbReference type="KEGG" id="nwi:Nwi_1849"/>
<dbReference type="eggNOG" id="COG0764">
    <property type="taxonomic scope" value="Bacteria"/>
</dbReference>
<dbReference type="HOGENOM" id="CLU_078912_1_0_5"/>
<dbReference type="OrthoDB" id="9772788at2"/>
<dbReference type="Proteomes" id="UP000002531">
    <property type="component" value="Chromosome"/>
</dbReference>
<dbReference type="GO" id="GO:0005737">
    <property type="term" value="C:cytoplasm"/>
    <property type="evidence" value="ECO:0007669"/>
    <property type="project" value="UniProtKB-SubCell"/>
</dbReference>
<dbReference type="GO" id="GO:0016020">
    <property type="term" value="C:membrane"/>
    <property type="evidence" value="ECO:0007669"/>
    <property type="project" value="GOC"/>
</dbReference>
<dbReference type="GO" id="GO:0019171">
    <property type="term" value="F:(3R)-hydroxyacyl-[acyl-carrier-protein] dehydratase activity"/>
    <property type="evidence" value="ECO:0007669"/>
    <property type="project" value="UniProtKB-EC"/>
</dbReference>
<dbReference type="GO" id="GO:0006633">
    <property type="term" value="P:fatty acid biosynthetic process"/>
    <property type="evidence" value="ECO:0007669"/>
    <property type="project" value="UniProtKB-UniRule"/>
</dbReference>
<dbReference type="GO" id="GO:0009245">
    <property type="term" value="P:lipid A biosynthetic process"/>
    <property type="evidence" value="ECO:0007669"/>
    <property type="project" value="UniProtKB-UniRule"/>
</dbReference>
<dbReference type="CDD" id="cd01288">
    <property type="entry name" value="FabZ"/>
    <property type="match status" value="1"/>
</dbReference>
<dbReference type="FunFam" id="3.10.129.10:FF:000001">
    <property type="entry name" value="3-hydroxyacyl-[acyl-carrier-protein] dehydratase FabZ"/>
    <property type="match status" value="1"/>
</dbReference>
<dbReference type="Gene3D" id="3.10.129.10">
    <property type="entry name" value="Hotdog Thioesterase"/>
    <property type="match status" value="1"/>
</dbReference>
<dbReference type="HAMAP" id="MF_00406">
    <property type="entry name" value="FabZ"/>
    <property type="match status" value="1"/>
</dbReference>
<dbReference type="InterPro" id="IPR013114">
    <property type="entry name" value="FabA_FabZ"/>
</dbReference>
<dbReference type="InterPro" id="IPR010084">
    <property type="entry name" value="FabZ"/>
</dbReference>
<dbReference type="InterPro" id="IPR029069">
    <property type="entry name" value="HotDog_dom_sf"/>
</dbReference>
<dbReference type="NCBIfam" id="TIGR01750">
    <property type="entry name" value="fabZ"/>
    <property type="match status" value="1"/>
</dbReference>
<dbReference type="NCBIfam" id="NF000582">
    <property type="entry name" value="PRK00006.1"/>
    <property type="match status" value="1"/>
</dbReference>
<dbReference type="PANTHER" id="PTHR30272">
    <property type="entry name" value="3-HYDROXYACYL-[ACYL-CARRIER-PROTEIN] DEHYDRATASE"/>
    <property type="match status" value="1"/>
</dbReference>
<dbReference type="PANTHER" id="PTHR30272:SF1">
    <property type="entry name" value="3-HYDROXYACYL-[ACYL-CARRIER-PROTEIN] DEHYDRATASE"/>
    <property type="match status" value="1"/>
</dbReference>
<dbReference type="Pfam" id="PF07977">
    <property type="entry name" value="FabA"/>
    <property type="match status" value="1"/>
</dbReference>
<dbReference type="SUPFAM" id="SSF54637">
    <property type="entry name" value="Thioesterase/thiol ester dehydrase-isomerase"/>
    <property type="match status" value="1"/>
</dbReference>
<reference key="1">
    <citation type="journal article" date="2006" name="Appl. Environ. Microbiol.">
        <title>Genome sequence of the chemolithoautotrophic nitrite-oxidizing bacterium Nitrobacter winogradskyi Nb-255.</title>
        <authorList>
            <person name="Starkenburg S.R."/>
            <person name="Chain P.S.G."/>
            <person name="Sayavedra-Soto L.A."/>
            <person name="Hauser L."/>
            <person name="Land M.L."/>
            <person name="Larimer F.W."/>
            <person name="Malfatti S.A."/>
            <person name="Klotz M.G."/>
            <person name="Bottomley P.J."/>
            <person name="Arp D.J."/>
            <person name="Hickey W.J."/>
        </authorList>
    </citation>
    <scope>NUCLEOTIDE SEQUENCE [LARGE SCALE GENOMIC DNA]</scope>
    <source>
        <strain>ATCC 25391 / DSM 10237 / CIP 104748 / NCIMB 11846 / Nb-255</strain>
    </source>
</reference>
<gene>
    <name evidence="1" type="primary">fabZ</name>
    <name type="ordered locus">Nwi_1849</name>
</gene>
<feature type="chain" id="PRO_0000230819" description="3-hydroxyacyl-[acyl-carrier-protein] dehydratase FabZ">
    <location>
        <begin position="1"/>
        <end position="151"/>
    </location>
</feature>
<feature type="active site" evidence="1">
    <location>
        <position position="56"/>
    </location>
</feature>